<keyword id="KW-0963">Cytoplasm</keyword>
<keyword id="KW-1185">Reference proteome</keyword>
<organism>
    <name type="scientific">Shigella boydii serotype 18 (strain CDC 3083-94 / BS512)</name>
    <dbReference type="NCBI Taxonomy" id="344609"/>
    <lineage>
        <taxon>Bacteria</taxon>
        <taxon>Pseudomonadati</taxon>
        <taxon>Pseudomonadota</taxon>
        <taxon>Gammaproteobacteria</taxon>
        <taxon>Enterobacterales</taxon>
        <taxon>Enterobacteriaceae</taxon>
        <taxon>Shigella</taxon>
    </lineage>
</organism>
<accession>B2U048</accession>
<protein>
    <recommendedName>
        <fullName evidence="1">Regulatory protein RecX</fullName>
    </recommendedName>
</protein>
<reference key="1">
    <citation type="submission" date="2008-05" db="EMBL/GenBank/DDBJ databases">
        <title>Complete sequence of Shigella boydii serotype 18 strain BS512.</title>
        <authorList>
            <person name="Rasko D.A."/>
            <person name="Rosovitz M."/>
            <person name="Maurelli A.T."/>
            <person name="Myers G."/>
            <person name="Seshadri R."/>
            <person name="Cer R."/>
            <person name="Jiang L."/>
            <person name="Ravel J."/>
            <person name="Sebastian Y."/>
        </authorList>
    </citation>
    <scope>NUCLEOTIDE SEQUENCE [LARGE SCALE GENOMIC DNA]</scope>
    <source>
        <strain>CDC 3083-94 / BS512</strain>
    </source>
</reference>
<comment type="function">
    <text evidence="1">Modulates RecA activity.</text>
</comment>
<comment type="subcellular location">
    <subcellularLocation>
        <location evidence="1">Cytoplasm</location>
    </subcellularLocation>
</comment>
<comment type="similarity">
    <text evidence="1">Belongs to the RecX family.</text>
</comment>
<dbReference type="EMBL" id="CP001063">
    <property type="protein sequence ID" value="ACD07942.1"/>
    <property type="molecule type" value="Genomic_DNA"/>
</dbReference>
<dbReference type="RefSeq" id="WP_000140497.1">
    <property type="nucleotide sequence ID" value="NC_010658.1"/>
</dbReference>
<dbReference type="SMR" id="B2U048"/>
<dbReference type="STRING" id="344609.SbBS512_E3179"/>
<dbReference type="KEGG" id="sbc:SbBS512_E3179"/>
<dbReference type="HOGENOM" id="CLU_066607_3_2_6"/>
<dbReference type="Proteomes" id="UP000001030">
    <property type="component" value="Chromosome"/>
</dbReference>
<dbReference type="GO" id="GO:0005737">
    <property type="term" value="C:cytoplasm"/>
    <property type="evidence" value="ECO:0007669"/>
    <property type="project" value="UniProtKB-SubCell"/>
</dbReference>
<dbReference type="GO" id="GO:0006282">
    <property type="term" value="P:regulation of DNA repair"/>
    <property type="evidence" value="ECO:0007669"/>
    <property type="project" value="UniProtKB-UniRule"/>
</dbReference>
<dbReference type="FunFam" id="1.10.10.10:FF:000133">
    <property type="entry name" value="Regulatory protein RecX"/>
    <property type="match status" value="1"/>
</dbReference>
<dbReference type="FunFam" id="1.10.10.10:FF:000134">
    <property type="entry name" value="Regulatory protein RecX"/>
    <property type="match status" value="1"/>
</dbReference>
<dbReference type="FunFam" id="1.10.10.10:FF:000209">
    <property type="entry name" value="Regulatory protein RecX"/>
    <property type="match status" value="1"/>
</dbReference>
<dbReference type="Gene3D" id="1.10.10.10">
    <property type="entry name" value="Winged helix-like DNA-binding domain superfamily/Winged helix DNA-binding domain"/>
    <property type="match status" value="3"/>
</dbReference>
<dbReference type="HAMAP" id="MF_01114">
    <property type="entry name" value="RecX"/>
    <property type="match status" value="1"/>
</dbReference>
<dbReference type="InterPro" id="IPR053926">
    <property type="entry name" value="RecX_HTH_1st"/>
</dbReference>
<dbReference type="InterPro" id="IPR053924">
    <property type="entry name" value="RecX_HTH_2nd"/>
</dbReference>
<dbReference type="InterPro" id="IPR053925">
    <property type="entry name" value="RecX_HTH_3rd"/>
</dbReference>
<dbReference type="InterPro" id="IPR003783">
    <property type="entry name" value="Regulatory_RecX"/>
</dbReference>
<dbReference type="InterPro" id="IPR036388">
    <property type="entry name" value="WH-like_DNA-bd_sf"/>
</dbReference>
<dbReference type="NCBIfam" id="NF001052">
    <property type="entry name" value="PRK00117.1-1"/>
    <property type="match status" value="1"/>
</dbReference>
<dbReference type="PANTHER" id="PTHR33602">
    <property type="entry name" value="REGULATORY PROTEIN RECX FAMILY PROTEIN"/>
    <property type="match status" value="1"/>
</dbReference>
<dbReference type="PANTHER" id="PTHR33602:SF1">
    <property type="entry name" value="REGULATORY PROTEIN RECX FAMILY PROTEIN"/>
    <property type="match status" value="1"/>
</dbReference>
<dbReference type="Pfam" id="PF21982">
    <property type="entry name" value="RecX_HTH1"/>
    <property type="match status" value="1"/>
</dbReference>
<dbReference type="Pfam" id="PF02631">
    <property type="entry name" value="RecX_HTH2"/>
    <property type="match status" value="1"/>
</dbReference>
<dbReference type="Pfam" id="PF21981">
    <property type="entry name" value="RecX_HTH3"/>
    <property type="match status" value="1"/>
</dbReference>
<name>RECX_SHIB3</name>
<evidence type="ECO:0000255" key="1">
    <source>
        <dbReference type="HAMAP-Rule" id="MF_01114"/>
    </source>
</evidence>
<feature type="chain" id="PRO_1000137194" description="Regulatory protein RecX">
    <location>
        <begin position="1"/>
        <end position="166"/>
    </location>
</feature>
<sequence>MTESTSRRPAYARLLDRAVHILAVRDHSEQELRRKLAAPIMGKNGPEEIDATAEDYERVIAWCHEHGYLDDSRFVARFIASRSRKGYGPARIRQELNQKGISREATEKAMRECDIDWCALARDQATRKYGEPLPTVFSEKVKIQRFLLYRGYLMEDIQDIWRNFAD</sequence>
<proteinExistence type="inferred from homology"/>
<gene>
    <name evidence="1" type="primary">recX</name>
    <name type="ordered locus">SbBS512_E3179</name>
</gene>